<accession>Q659Q8</accession>
<name>SOMA_BALPH</name>
<dbReference type="EMBL" id="AJ831741">
    <property type="protein sequence ID" value="CAH42020.1"/>
    <property type="molecule type" value="Genomic_DNA"/>
</dbReference>
<dbReference type="SMR" id="Q659Q8"/>
<dbReference type="GO" id="GO:0005615">
    <property type="term" value="C:extracellular space"/>
    <property type="evidence" value="ECO:0007669"/>
    <property type="project" value="InterPro"/>
</dbReference>
<dbReference type="GO" id="GO:0008083">
    <property type="term" value="F:growth factor activity"/>
    <property type="evidence" value="ECO:0007669"/>
    <property type="project" value="TreeGrafter"/>
</dbReference>
<dbReference type="GO" id="GO:0005131">
    <property type="term" value="F:growth hormone receptor binding"/>
    <property type="evidence" value="ECO:0007669"/>
    <property type="project" value="InterPro"/>
</dbReference>
<dbReference type="GO" id="GO:0005179">
    <property type="term" value="F:hormone activity"/>
    <property type="evidence" value="ECO:0007669"/>
    <property type="project" value="UniProtKB-KW"/>
</dbReference>
<dbReference type="GO" id="GO:0046872">
    <property type="term" value="F:metal ion binding"/>
    <property type="evidence" value="ECO:0007669"/>
    <property type="project" value="UniProtKB-KW"/>
</dbReference>
<dbReference type="GO" id="GO:0048513">
    <property type="term" value="P:animal organ development"/>
    <property type="evidence" value="ECO:0007669"/>
    <property type="project" value="TreeGrafter"/>
</dbReference>
<dbReference type="GO" id="GO:0060396">
    <property type="term" value="P:growth hormone receptor signaling pathway"/>
    <property type="evidence" value="ECO:0007669"/>
    <property type="project" value="TreeGrafter"/>
</dbReference>
<dbReference type="GO" id="GO:0045927">
    <property type="term" value="P:positive regulation of growth"/>
    <property type="evidence" value="ECO:0007669"/>
    <property type="project" value="TreeGrafter"/>
</dbReference>
<dbReference type="GO" id="GO:0046427">
    <property type="term" value="P:positive regulation of receptor signaling pathway via JAK-STAT"/>
    <property type="evidence" value="ECO:0007669"/>
    <property type="project" value="TreeGrafter"/>
</dbReference>
<dbReference type="GO" id="GO:0031667">
    <property type="term" value="P:response to nutrient levels"/>
    <property type="evidence" value="ECO:0007669"/>
    <property type="project" value="TreeGrafter"/>
</dbReference>
<dbReference type="CDD" id="cd10285">
    <property type="entry name" value="somatotropin_like"/>
    <property type="match status" value="1"/>
</dbReference>
<dbReference type="FunFam" id="1.20.1250.10:FF:000002">
    <property type="entry name" value="Growth hormone"/>
    <property type="match status" value="1"/>
</dbReference>
<dbReference type="Gene3D" id="1.20.1250.10">
    <property type="match status" value="1"/>
</dbReference>
<dbReference type="InterPro" id="IPR009079">
    <property type="entry name" value="4_helix_cytokine-like_core"/>
</dbReference>
<dbReference type="InterPro" id="IPR034975">
    <property type="entry name" value="Somatotropin"/>
</dbReference>
<dbReference type="InterPro" id="IPR001400">
    <property type="entry name" value="Somatotropin/Prolactin"/>
</dbReference>
<dbReference type="InterPro" id="IPR018116">
    <property type="entry name" value="Somatotropin_CS"/>
</dbReference>
<dbReference type="PANTHER" id="PTHR11417:SF2">
    <property type="entry name" value="SOMATOTROPIN"/>
    <property type="match status" value="1"/>
</dbReference>
<dbReference type="PANTHER" id="PTHR11417">
    <property type="entry name" value="SOMATOTROPIN,PROLACTIN"/>
    <property type="match status" value="1"/>
</dbReference>
<dbReference type="Pfam" id="PF00103">
    <property type="entry name" value="Hormone_1"/>
    <property type="match status" value="1"/>
</dbReference>
<dbReference type="PRINTS" id="PR00836">
    <property type="entry name" value="SOMATOTROPIN"/>
</dbReference>
<dbReference type="SUPFAM" id="SSF47266">
    <property type="entry name" value="4-helical cytokines"/>
    <property type="match status" value="1"/>
</dbReference>
<dbReference type="PROSITE" id="PS00266">
    <property type="entry name" value="SOMATOTROPIN_1"/>
    <property type="match status" value="1"/>
</dbReference>
<dbReference type="PROSITE" id="PS00338">
    <property type="entry name" value="SOMATOTROPIN_2"/>
    <property type="match status" value="1"/>
</dbReference>
<feature type="signal peptide" evidence="1">
    <location>
        <begin position="1"/>
        <end position="26"/>
    </location>
</feature>
<feature type="chain" id="PRO_0000032972" description="Somatotropin">
    <location>
        <begin position="27"/>
        <end position="216"/>
    </location>
</feature>
<feature type="binding site" evidence="1">
    <location>
        <position position="45"/>
    </location>
    <ligand>
        <name>Zn(2+)</name>
        <dbReference type="ChEBI" id="CHEBI:29105"/>
    </ligand>
</feature>
<feature type="binding site" evidence="1">
    <location>
        <position position="198"/>
    </location>
    <ligand>
        <name>Zn(2+)</name>
        <dbReference type="ChEBI" id="CHEBI:29105"/>
    </ligand>
</feature>
<feature type="modified residue" description="Phosphoserine" evidence="2">
    <location>
        <position position="131"/>
    </location>
</feature>
<feature type="disulfide bond" evidence="1">
    <location>
        <begin position="78"/>
        <end position="189"/>
    </location>
</feature>
<feature type="disulfide bond" evidence="1">
    <location>
        <begin position="206"/>
        <end position="214"/>
    </location>
</feature>
<organism>
    <name type="scientific">Balaenoptera physalus</name>
    <name type="common">Fin whale</name>
    <name type="synonym">Balaena physalus</name>
    <dbReference type="NCBI Taxonomy" id="9770"/>
    <lineage>
        <taxon>Eukaryota</taxon>
        <taxon>Metazoa</taxon>
        <taxon>Chordata</taxon>
        <taxon>Craniata</taxon>
        <taxon>Vertebrata</taxon>
        <taxon>Euteleostomi</taxon>
        <taxon>Mammalia</taxon>
        <taxon>Eutheria</taxon>
        <taxon>Laurasiatheria</taxon>
        <taxon>Artiodactyla</taxon>
        <taxon>Whippomorpha</taxon>
        <taxon>Cetacea</taxon>
        <taxon>Mysticeti</taxon>
        <taxon>Balaenopteridae</taxon>
        <taxon>Balaenoptera</taxon>
    </lineage>
</organism>
<sequence>MAAGPRTSMLLAFALLCLPWTQEVGAFPAMPLSSLFANAVLRAQHLHQLAADTYKEFERAYIPEGQRYSIQNAQAAFCFSETIPAPTGKDEAQQRSDVELLRFSLLLIQSWLGPVQFLSRVFTNSLVFGTSDRVYEKLKDLEEGIQALMRELEDGSPRAGQILKQTYDKFDTNMRSDDALLKNYGLLSCFKKDLHKAETYLRVMKCRRFVESSCAF</sequence>
<proteinExistence type="inferred from homology"/>
<reference key="1">
    <citation type="submission" date="2004-09" db="EMBL/GenBank/DDBJ databases">
        <title>Cloning and characterization of the gene encoding pituitary growth hormone in the finback whale (Balaenoptera physalus).</title>
        <authorList>
            <person name="Wallis O.C."/>
            <person name="Maniou Z."/>
            <person name="Wallis M."/>
        </authorList>
    </citation>
    <scope>NUCLEOTIDE SEQUENCE [GENOMIC DNA]</scope>
    <source>
        <tissue>Skin</tissue>
    </source>
</reference>
<protein>
    <recommendedName>
        <fullName>Somatotropin</fullName>
    </recommendedName>
    <alternativeName>
        <fullName>Growth hormone</fullName>
    </alternativeName>
</protein>
<keyword id="KW-1015">Disulfide bond</keyword>
<keyword id="KW-0372">Hormone</keyword>
<keyword id="KW-0479">Metal-binding</keyword>
<keyword id="KW-0597">Phosphoprotein</keyword>
<keyword id="KW-0964">Secreted</keyword>
<keyword id="KW-0732">Signal</keyword>
<keyword id="KW-0862">Zinc</keyword>
<gene>
    <name type="primary">GH1</name>
    <name type="synonym">GH</name>
</gene>
<evidence type="ECO:0000250" key="1"/>
<evidence type="ECO:0000250" key="2">
    <source>
        <dbReference type="UniProtKB" id="P01241"/>
    </source>
</evidence>
<evidence type="ECO:0000305" key="3"/>
<comment type="function">
    <text evidence="1">Plays an important role in growth control. Its major role in stimulating body growth is to stimulate the liver and other tissues to secrete IGF1. It stimulates both the differentiation and proliferation of myoblasts. It also stimulates amino acid uptake and protein synthesis in muscle and other tissues (By similarity).</text>
</comment>
<comment type="subcellular location">
    <subcellularLocation>
        <location evidence="1">Secreted</location>
    </subcellularLocation>
</comment>
<comment type="similarity">
    <text evidence="3">Belongs to the somatotropin/prolactin family.</text>
</comment>